<feature type="initiator methionine" description="Removed" evidence="1">
    <location>
        <position position="1"/>
    </location>
</feature>
<feature type="chain" id="PRO_0000130655" description="Large ribosomal subunit protein uL24">
    <location>
        <begin position="2"/>
        <end position="104"/>
    </location>
</feature>
<gene>
    <name evidence="2" type="primary">rplX</name>
    <name type="ordered locus">c4073</name>
</gene>
<name>RL24_ECOL6</name>
<reference key="1">
    <citation type="journal article" date="2002" name="Proc. Natl. Acad. Sci. U.S.A.">
        <title>Extensive mosaic structure revealed by the complete genome sequence of uropathogenic Escherichia coli.</title>
        <authorList>
            <person name="Welch R.A."/>
            <person name="Burland V."/>
            <person name="Plunkett G. III"/>
            <person name="Redford P."/>
            <person name="Roesch P."/>
            <person name="Rasko D."/>
            <person name="Buckles E.L."/>
            <person name="Liou S.-R."/>
            <person name="Boutin A."/>
            <person name="Hackett J."/>
            <person name="Stroud D."/>
            <person name="Mayhew G.F."/>
            <person name="Rose D.J."/>
            <person name="Zhou S."/>
            <person name="Schwartz D.C."/>
            <person name="Perna N.T."/>
            <person name="Mobley H.L.T."/>
            <person name="Donnenberg M.S."/>
            <person name="Blattner F.R."/>
        </authorList>
    </citation>
    <scope>NUCLEOTIDE SEQUENCE [LARGE SCALE GENOMIC DNA]</scope>
    <source>
        <strain>CFT073 / ATCC 700928 / UPEC</strain>
    </source>
</reference>
<keyword id="KW-1185">Reference proteome</keyword>
<keyword id="KW-0687">Ribonucleoprotein</keyword>
<keyword id="KW-0689">Ribosomal protein</keyword>
<keyword id="KW-0694">RNA-binding</keyword>
<keyword id="KW-0699">rRNA-binding</keyword>
<accession>Q8FD03</accession>
<evidence type="ECO:0000250" key="1"/>
<evidence type="ECO:0000255" key="2">
    <source>
        <dbReference type="HAMAP-Rule" id="MF_01326"/>
    </source>
</evidence>
<evidence type="ECO:0000305" key="3"/>
<sequence length="104" mass="11346">MAAKIRRDDEVIVLTGKDKGKRGKVKNVLSSGKVIVEGINLVKKHQKPVPALNQPGGIVEKEAAIQVSNVAIFNATTGKADRVGFRFEDGKKVRFFKSNSETIK</sequence>
<dbReference type="EMBL" id="AE014075">
    <property type="protein sequence ID" value="AAN82511.1"/>
    <property type="molecule type" value="Genomic_DNA"/>
</dbReference>
<dbReference type="RefSeq" id="WP_000729186.1">
    <property type="nucleotide sequence ID" value="NZ_CP051263.1"/>
</dbReference>
<dbReference type="SMR" id="Q8FD03"/>
<dbReference type="STRING" id="199310.c4073"/>
<dbReference type="KEGG" id="ecc:c4073"/>
<dbReference type="eggNOG" id="COG0198">
    <property type="taxonomic scope" value="Bacteria"/>
</dbReference>
<dbReference type="HOGENOM" id="CLU_093315_2_2_6"/>
<dbReference type="BioCyc" id="ECOL199310:C4073-MONOMER"/>
<dbReference type="Proteomes" id="UP000001410">
    <property type="component" value="Chromosome"/>
</dbReference>
<dbReference type="GO" id="GO:0005829">
    <property type="term" value="C:cytosol"/>
    <property type="evidence" value="ECO:0007669"/>
    <property type="project" value="UniProtKB-ARBA"/>
</dbReference>
<dbReference type="GO" id="GO:1990904">
    <property type="term" value="C:ribonucleoprotein complex"/>
    <property type="evidence" value="ECO:0007669"/>
    <property type="project" value="UniProtKB-KW"/>
</dbReference>
<dbReference type="GO" id="GO:0005840">
    <property type="term" value="C:ribosome"/>
    <property type="evidence" value="ECO:0007669"/>
    <property type="project" value="UniProtKB-KW"/>
</dbReference>
<dbReference type="GO" id="GO:0019843">
    <property type="term" value="F:rRNA binding"/>
    <property type="evidence" value="ECO:0007669"/>
    <property type="project" value="UniProtKB-UniRule"/>
</dbReference>
<dbReference type="GO" id="GO:0003735">
    <property type="term" value="F:structural constituent of ribosome"/>
    <property type="evidence" value="ECO:0007669"/>
    <property type="project" value="InterPro"/>
</dbReference>
<dbReference type="GO" id="GO:0006412">
    <property type="term" value="P:translation"/>
    <property type="evidence" value="ECO:0007669"/>
    <property type="project" value="UniProtKB-UniRule"/>
</dbReference>
<dbReference type="CDD" id="cd06089">
    <property type="entry name" value="KOW_RPL26"/>
    <property type="match status" value="1"/>
</dbReference>
<dbReference type="FunFam" id="2.30.30.30:FF:000004">
    <property type="entry name" value="50S ribosomal protein L24"/>
    <property type="match status" value="1"/>
</dbReference>
<dbReference type="Gene3D" id="2.30.30.30">
    <property type="match status" value="1"/>
</dbReference>
<dbReference type="HAMAP" id="MF_01326_B">
    <property type="entry name" value="Ribosomal_uL24_B"/>
    <property type="match status" value="1"/>
</dbReference>
<dbReference type="InterPro" id="IPR005824">
    <property type="entry name" value="KOW"/>
</dbReference>
<dbReference type="InterPro" id="IPR014722">
    <property type="entry name" value="Rib_uL2_dom2"/>
</dbReference>
<dbReference type="InterPro" id="IPR003256">
    <property type="entry name" value="Ribosomal_uL24"/>
</dbReference>
<dbReference type="InterPro" id="IPR005825">
    <property type="entry name" value="Ribosomal_uL24_CS"/>
</dbReference>
<dbReference type="InterPro" id="IPR041988">
    <property type="entry name" value="Ribosomal_uL24_KOW"/>
</dbReference>
<dbReference type="InterPro" id="IPR008991">
    <property type="entry name" value="Translation_prot_SH3-like_sf"/>
</dbReference>
<dbReference type="NCBIfam" id="TIGR01079">
    <property type="entry name" value="rplX_bact"/>
    <property type="match status" value="1"/>
</dbReference>
<dbReference type="PANTHER" id="PTHR12903">
    <property type="entry name" value="MITOCHONDRIAL RIBOSOMAL PROTEIN L24"/>
    <property type="match status" value="1"/>
</dbReference>
<dbReference type="Pfam" id="PF00467">
    <property type="entry name" value="KOW"/>
    <property type="match status" value="1"/>
</dbReference>
<dbReference type="Pfam" id="PF17136">
    <property type="entry name" value="ribosomal_L24"/>
    <property type="match status" value="1"/>
</dbReference>
<dbReference type="SMART" id="SM00739">
    <property type="entry name" value="KOW"/>
    <property type="match status" value="1"/>
</dbReference>
<dbReference type="SUPFAM" id="SSF50104">
    <property type="entry name" value="Translation proteins SH3-like domain"/>
    <property type="match status" value="1"/>
</dbReference>
<dbReference type="PROSITE" id="PS01108">
    <property type="entry name" value="RIBOSOMAL_L24"/>
    <property type="match status" value="1"/>
</dbReference>
<protein>
    <recommendedName>
        <fullName evidence="2">Large ribosomal subunit protein uL24</fullName>
    </recommendedName>
    <alternativeName>
        <fullName evidence="3">50S ribosomal protein L24</fullName>
    </alternativeName>
</protein>
<proteinExistence type="inferred from homology"/>
<comment type="function">
    <text evidence="2">One of two assembly initiator proteins, it binds directly to the 5'-end of the 23S rRNA, where it nucleates assembly of the 50S subunit.</text>
</comment>
<comment type="function">
    <text evidence="2">One of the proteins that surrounds the polypeptide exit tunnel on the outside of the subunit.</text>
</comment>
<comment type="subunit">
    <text evidence="2">Part of the 50S ribosomal subunit.</text>
</comment>
<comment type="similarity">
    <text evidence="2">Belongs to the universal ribosomal protein uL24 family.</text>
</comment>
<organism>
    <name type="scientific">Escherichia coli O6:H1 (strain CFT073 / ATCC 700928 / UPEC)</name>
    <dbReference type="NCBI Taxonomy" id="199310"/>
    <lineage>
        <taxon>Bacteria</taxon>
        <taxon>Pseudomonadati</taxon>
        <taxon>Pseudomonadota</taxon>
        <taxon>Gammaproteobacteria</taxon>
        <taxon>Enterobacterales</taxon>
        <taxon>Enterobacteriaceae</taxon>
        <taxon>Escherichia</taxon>
    </lineage>
</organism>